<dbReference type="EMBL" id="AE015927">
    <property type="protein sequence ID" value="AAO36700.1"/>
    <property type="molecule type" value="Genomic_DNA"/>
</dbReference>
<dbReference type="RefSeq" id="WP_011100361.1">
    <property type="nucleotide sequence ID" value="NC_004557.1"/>
</dbReference>
<dbReference type="SMR" id="Q891Z5"/>
<dbReference type="STRING" id="212717.CTC_02215"/>
<dbReference type="GeneID" id="24253495"/>
<dbReference type="KEGG" id="ctc:CTC_02215"/>
<dbReference type="HOGENOM" id="CLU_062974_2_2_9"/>
<dbReference type="OrthoDB" id="9781053at2"/>
<dbReference type="Proteomes" id="UP000001412">
    <property type="component" value="Chromosome"/>
</dbReference>
<dbReference type="GO" id="GO:0005829">
    <property type="term" value="C:cytosol"/>
    <property type="evidence" value="ECO:0007669"/>
    <property type="project" value="TreeGrafter"/>
</dbReference>
<dbReference type="GO" id="GO:0003677">
    <property type="term" value="F:DNA binding"/>
    <property type="evidence" value="ECO:0007669"/>
    <property type="project" value="UniProtKB-UniRule"/>
</dbReference>
<dbReference type="GO" id="GO:0006355">
    <property type="term" value="P:regulation of DNA-templated transcription"/>
    <property type="evidence" value="ECO:0007669"/>
    <property type="project" value="UniProtKB-UniRule"/>
</dbReference>
<dbReference type="FunFam" id="1.10.10.200:FF:000002">
    <property type="entry name" value="Probable transcriptional regulatory protein CLM62_37755"/>
    <property type="match status" value="1"/>
</dbReference>
<dbReference type="FunFam" id="3.30.70.980:FF:000002">
    <property type="entry name" value="Probable transcriptional regulatory protein YebC"/>
    <property type="match status" value="1"/>
</dbReference>
<dbReference type="Gene3D" id="1.10.10.200">
    <property type="match status" value="1"/>
</dbReference>
<dbReference type="Gene3D" id="3.30.70.980">
    <property type="match status" value="2"/>
</dbReference>
<dbReference type="HAMAP" id="MF_00693">
    <property type="entry name" value="Transcrip_reg_TACO1"/>
    <property type="match status" value="1"/>
</dbReference>
<dbReference type="InterPro" id="IPR017856">
    <property type="entry name" value="Integrase-like_N"/>
</dbReference>
<dbReference type="InterPro" id="IPR048300">
    <property type="entry name" value="TACO1_YebC-like_2nd/3rd_dom"/>
</dbReference>
<dbReference type="InterPro" id="IPR049083">
    <property type="entry name" value="TACO1_YebC_N"/>
</dbReference>
<dbReference type="InterPro" id="IPR002876">
    <property type="entry name" value="Transcrip_reg_TACO1-like"/>
</dbReference>
<dbReference type="InterPro" id="IPR026564">
    <property type="entry name" value="Transcrip_reg_TACO1-like_dom3"/>
</dbReference>
<dbReference type="InterPro" id="IPR029072">
    <property type="entry name" value="YebC-like"/>
</dbReference>
<dbReference type="NCBIfam" id="NF001030">
    <property type="entry name" value="PRK00110.1"/>
    <property type="match status" value="1"/>
</dbReference>
<dbReference type="NCBIfam" id="NF009044">
    <property type="entry name" value="PRK12378.1"/>
    <property type="match status" value="1"/>
</dbReference>
<dbReference type="NCBIfam" id="TIGR01033">
    <property type="entry name" value="YebC/PmpR family DNA-binding transcriptional regulator"/>
    <property type="match status" value="1"/>
</dbReference>
<dbReference type="PANTHER" id="PTHR12532:SF6">
    <property type="entry name" value="TRANSCRIPTIONAL REGULATORY PROTEIN YEBC-RELATED"/>
    <property type="match status" value="1"/>
</dbReference>
<dbReference type="PANTHER" id="PTHR12532">
    <property type="entry name" value="TRANSLATIONAL ACTIVATOR OF CYTOCHROME C OXIDASE 1"/>
    <property type="match status" value="1"/>
</dbReference>
<dbReference type="Pfam" id="PF20772">
    <property type="entry name" value="TACO1_YebC_N"/>
    <property type="match status" value="1"/>
</dbReference>
<dbReference type="Pfam" id="PF01709">
    <property type="entry name" value="Transcrip_reg"/>
    <property type="match status" value="1"/>
</dbReference>
<dbReference type="SUPFAM" id="SSF75625">
    <property type="entry name" value="YebC-like"/>
    <property type="match status" value="1"/>
</dbReference>
<keyword id="KW-0963">Cytoplasm</keyword>
<keyword id="KW-0238">DNA-binding</keyword>
<keyword id="KW-1185">Reference proteome</keyword>
<keyword id="KW-0804">Transcription</keyword>
<keyword id="KW-0805">Transcription regulation</keyword>
<organism>
    <name type="scientific">Clostridium tetani (strain Massachusetts / E88)</name>
    <dbReference type="NCBI Taxonomy" id="212717"/>
    <lineage>
        <taxon>Bacteria</taxon>
        <taxon>Bacillati</taxon>
        <taxon>Bacillota</taxon>
        <taxon>Clostridia</taxon>
        <taxon>Eubacteriales</taxon>
        <taxon>Clostridiaceae</taxon>
        <taxon>Clostridium</taxon>
    </lineage>
</organism>
<proteinExistence type="inferred from homology"/>
<reference key="1">
    <citation type="journal article" date="2003" name="Proc. Natl. Acad. Sci. U.S.A.">
        <title>The genome sequence of Clostridium tetani, the causative agent of tetanus disease.</title>
        <authorList>
            <person name="Brueggemann H."/>
            <person name="Baeumer S."/>
            <person name="Fricke W.F."/>
            <person name="Wiezer A."/>
            <person name="Liesegang H."/>
            <person name="Decker I."/>
            <person name="Herzberg C."/>
            <person name="Martinez-Arias R."/>
            <person name="Merkl R."/>
            <person name="Henne A."/>
            <person name="Gottschalk G."/>
        </authorList>
    </citation>
    <scope>NUCLEOTIDE SEQUENCE [LARGE SCALE GENOMIC DNA]</scope>
    <source>
        <strain>Massachusetts / E88</strain>
    </source>
</reference>
<evidence type="ECO:0000255" key="1">
    <source>
        <dbReference type="HAMAP-Rule" id="MF_00693"/>
    </source>
</evidence>
<accession>Q891Z5</accession>
<comment type="subcellular location">
    <subcellularLocation>
        <location evidence="1">Cytoplasm</location>
    </subcellularLocation>
</comment>
<comment type="similarity">
    <text evidence="1">Belongs to the TACO1 family.</text>
</comment>
<name>Y2215_CLOTE</name>
<protein>
    <recommendedName>
        <fullName evidence="1">Probable transcriptional regulatory protein CTC_02215</fullName>
    </recommendedName>
</protein>
<gene>
    <name type="ordered locus">CTC_02215</name>
</gene>
<sequence length="246" mass="27239">MSGHSKWHNIQAKKGKMDAKRGKIFTKIGRELIIASKEGGSNPDTNSKLRDVIAKARANNMPQDTISRAIKKGAGELEGVNYEEMTYEGYGPNGVAFVVSTLTDNKNRTAGNVRAAFSKHGGNLGETGCVGWMFQSKGQMIIERNEDMDEDEIMMVALDAGAEDFESSEEVFEIITTPESFGEVREKLEAEGFEFISAEVTMIPDTTIEISMERAAGLQKLIDKLEDDDDVQNVYHNAEFPEEWEG</sequence>
<feature type="chain" id="PRO_0000175791" description="Probable transcriptional regulatory protein CTC_02215">
    <location>
        <begin position="1"/>
        <end position="246"/>
    </location>
</feature>